<evidence type="ECO:0000255" key="1"/>
<evidence type="ECO:0000256" key="2">
    <source>
        <dbReference type="SAM" id="MobiDB-lite"/>
    </source>
</evidence>
<evidence type="ECO:0000269" key="3">
    <source>
    </source>
</evidence>
<evidence type="ECO:0000305" key="4"/>
<dbReference type="EMBL" id="HM008657">
    <property type="protein sequence ID" value="ADI48419.1"/>
    <property type="molecule type" value="mRNA"/>
</dbReference>
<dbReference type="EMBL" id="BT035768">
    <property type="protein sequence ID" value="ACF80773.1"/>
    <property type="molecule type" value="mRNA"/>
</dbReference>
<dbReference type="EMBL" id="EU968317">
    <property type="protein sequence ID" value="ACG40435.1"/>
    <property type="molecule type" value="mRNA"/>
</dbReference>
<dbReference type="EMBL" id="EU972766">
    <property type="protein sequence ID" value="ACG44884.1"/>
    <property type="molecule type" value="mRNA"/>
</dbReference>
<dbReference type="RefSeq" id="NP_001132085.2">
    <property type="nucleotide sequence ID" value="NM_001138613.2"/>
</dbReference>
<dbReference type="RefSeq" id="NP_001388773.1">
    <property type="nucleotide sequence ID" value="NM_001401844.1"/>
</dbReference>
<dbReference type="RefSeq" id="XP_008654373.1">
    <property type="nucleotide sequence ID" value="XM_008656151.1"/>
</dbReference>
<dbReference type="RefSeq" id="XP_008654374.1">
    <property type="nucleotide sequence ID" value="XM_008656152.1"/>
</dbReference>
<dbReference type="RefSeq" id="XP_008654375.1">
    <property type="nucleotide sequence ID" value="XM_008656153.1"/>
</dbReference>
<dbReference type="RefSeq" id="XP_008654376.1">
    <property type="nucleotide sequence ID" value="XM_008656154.1"/>
</dbReference>
<dbReference type="RefSeq" id="XP_008654377.1">
    <property type="nucleotide sequence ID" value="XM_008656155.1"/>
</dbReference>
<dbReference type="RefSeq" id="XP_008654378.1">
    <property type="nucleotide sequence ID" value="XM_008656156.1"/>
</dbReference>
<dbReference type="RefSeq" id="XP_008654379.1">
    <property type="nucleotide sequence ID" value="XM_008656157.1"/>
</dbReference>
<dbReference type="RefSeq" id="XP_008654380.1">
    <property type="nucleotide sequence ID" value="XM_008656158.1"/>
</dbReference>
<dbReference type="RefSeq" id="XP_008654381.1">
    <property type="nucleotide sequence ID" value="XM_008656159.1"/>
</dbReference>
<dbReference type="STRING" id="4577.B4FF80"/>
<dbReference type="PaxDb" id="4577-GRMZM5G892035_P02"/>
<dbReference type="EnsemblPlants" id="Zm00001eb333140_T001">
    <property type="protein sequence ID" value="Zm00001eb333140_P001"/>
    <property type="gene ID" value="Zm00001eb333140"/>
</dbReference>
<dbReference type="EnsemblPlants" id="Zm00001eb333140_T002">
    <property type="protein sequence ID" value="Zm00001eb333140_P002"/>
    <property type="gene ID" value="Zm00001eb333140"/>
</dbReference>
<dbReference type="EnsemblPlants" id="Zm00001eb333140_T003">
    <property type="protein sequence ID" value="Zm00001eb333140_P003"/>
    <property type="gene ID" value="Zm00001eb333140"/>
</dbReference>
<dbReference type="EnsemblPlants" id="Zm00001eb333140_T004">
    <property type="protein sequence ID" value="Zm00001eb333140_P004"/>
    <property type="gene ID" value="Zm00001eb333140"/>
</dbReference>
<dbReference type="EnsemblPlants" id="Zm00001eb333140_T005">
    <property type="protein sequence ID" value="Zm00001eb333140_P005"/>
    <property type="gene ID" value="Zm00001eb333140"/>
</dbReference>
<dbReference type="GeneID" id="100193499"/>
<dbReference type="Gramene" id="Zm00001eb333140_T001">
    <property type="protein sequence ID" value="Zm00001eb333140_P001"/>
    <property type="gene ID" value="Zm00001eb333140"/>
</dbReference>
<dbReference type="Gramene" id="Zm00001eb333140_T002">
    <property type="protein sequence ID" value="Zm00001eb333140_P002"/>
    <property type="gene ID" value="Zm00001eb333140"/>
</dbReference>
<dbReference type="Gramene" id="Zm00001eb333140_T003">
    <property type="protein sequence ID" value="Zm00001eb333140_P003"/>
    <property type="gene ID" value="Zm00001eb333140"/>
</dbReference>
<dbReference type="Gramene" id="Zm00001eb333140_T004">
    <property type="protein sequence ID" value="Zm00001eb333140_P004"/>
    <property type="gene ID" value="Zm00001eb333140"/>
</dbReference>
<dbReference type="Gramene" id="Zm00001eb333140_T005">
    <property type="protein sequence ID" value="Zm00001eb333140_P005"/>
    <property type="gene ID" value="Zm00001eb333140"/>
</dbReference>
<dbReference type="KEGG" id="zma:100193499"/>
<dbReference type="eggNOG" id="ENOG502RV9Z">
    <property type="taxonomic scope" value="Eukaryota"/>
</dbReference>
<dbReference type="HOGENOM" id="CLU_083147_0_0_1"/>
<dbReference type="InParanoid" id="B4FF80"/>
<dbReference type="OMA" id="QEYREIC"/>
<dbReference type="OrthoDB" id="1045822at2759"/>
<dbReference type="Proteomes" id="UP000007305">
    <property type="component" value="Chromosome 8"/>
</dbReference>
<dbReference type="ExpressionAtlas" id="B4FF80">
    <property type="expression patterns" value="baseline and differential"/>
</dbReference>
<dbReference type="GO" id="GO:0016020">
    <property type="term" value="C:membrane"/>
    <property type="evidence" value="ECO:0007669"/>
    <property type="project" value="UniProtKB-SubCell"/>
</dbReference>
<dbReference type="InterPro" id="IPR006461">
    <property type="entry name" value="PLAC_motif_containing"/>
</dbReference>
<dbReference type="NCBIfam" id="TIGR01571">
    <property type="entry name" value="A_thal_Cys_rich"/>
    <property type="match status" value="1"/>
</dbReference>
<dbReference type="PANTHER" id="PTHR15907">
    <property type="entry name" value="DUF614 FAMILY PROTEIN-RELATED"/>
    <property type="match status" value="1"/>
</dbReference>
<dbReference type="Pfam" id="PF04749">
    <property type="entry name" value="PLAC8"/>
    <property type="match status" value="1"/>
</dbReference>
<sequence>MAGKGSYVPPQYIPLYSLDTEEDRVPAVEENHATRPKLNQDPTQWSSGICACFDDPQSCCIGAICPCFLFGKNAQFLGSGTLAGSCTTHCMLWGLLTSLCCVFTGGLVLAVPGSAVACYACGYRSALRTKYNLPEAPCGDLTTHLFCHLCAICQEYREIRERTGSGSSPAPNVTPPPVQTMDEL</sequence>
<comment type="subcellular location">
    <subcellularLocation>
        <location evidence="4">Membrane</location>
        <topology evidence="4">Single-pass membrane protein</topology>
    </subcellularLocation>
</comment>
<comment type="tissue specificity">
    <text evidence="3">Expressed in roots, leaves, stalks, immature ears, endosperm and pollen.</text>
</comment>
<comment type="similarity">
    <text evidence="4">Belongs to the cornifelin family.</text>
</comment>
<feature type="chain" id="PRO_0000407733" description="Cell number regulator 5">
    <location>
        <begin position="1"/>
        <end position="184"/>
    </location>
</feature>
<feature type="transmembrane region" description="Helical" evidence="1">
    <location>
        <begin position="91"/>
        <end position="111"/>
    </location>
</feature>
<feature type="region of interest" description="Disordered" evidence="2">
    <location>
        <begin position="162"/>
        <end position="184"/>
    </location>
</feature>
<feature type="sequence conflict" description="In Ref. 3; ACG44884/ACG40435." evidence="4" ref="3">
    <original>I</original>
    <variation>T</variation>
    <location>
        <position position="64"/>
    </location>
</feature>
<keyword id="KW-0472">Membrane</keyword>
<keyword id="KW-1185">Reference proteome</keyword>
<keyword id="KW-0812">Transmembrane</keyword>
<keyword id="KW-1133">Transmembrane helix</keyword>
<gene>
    <name type="primary">CNR5</name>
</gene>
<organism>
    <name type="scientific">Zea mays</name>
    <name type="common">Maize</name>
    <dbReference type="NCBI Taxonomy" id="4577"/>
    <lineage>
        <taxon>Eukaryota</taxon>
        <taxon>Viridiplantae</taxon>
        <taxon>Streptophyta</taxon>
        <taxon>Embryophyta</taxon>
        <taxon>Tracheophyta</taxon>
        <taxon>Spermatophyta</taxon>
        <taxon>Magnoliopsida</taxon>
        <taxon>Liliopsida</taxon>
        <taxon>Poales</taxon>
        <taxon>Poaceae</taxon>
        <taxon>PACMAD clade</taxon>
        <taxon>Panicoideae</taxon>
        <taxon>Andropogonodae</taxon>
        <taxon>Andropogoneae</taxon>
        <taxon>Tripsacinae</taxon>
        <taxon>Zea</taxon>
    </lineage>
</organism>
<reference key="1">
    <citation type="journal article" date="2010" name="Plant Cell">
        <title>Cell Number Regulator1 affects plant and organ size in maize: implications for crop yield enhancement and heterosis.</title>
        <authorList>
            <person name="Guo M."/>
            <person name="Rupe M.A."/>
            <person name="Dieter J.A."/>
            <person name="Zou J."/>
            <person name="Spielbauer D."/>
            <person name="Duncan K.E."/>
            <person name="Howard R.J."/>
            <person name="Hou Z."/>
            <person name="Simmons C.R."/>
        </authorList>
    </citation>
    <scope>NUCLEOTIDE SEQUENCE [MRNA]</scope>
    <scope>TISSUE SPECIFICITY</scope>
    <scope>GENE FAMILY</scope>
    <scope>NOMENCLATURE</scope>
    <source>
        <strain>cv. B73</strain>
    </source>
</reference>
<reference key="2">
    <citation type="submission" date="2008-07" db="EMBL/GenBank/DDBJ databases">
        <title>Maize full-length cDNA project.</title>
        <authorList>
            <person name="Yu Y."/>
            <person name="Currie J."/>
            <person name="Lomeli R."/>
            <person name="Angelova A."/>
            <person name="Collura K."/>
            <person name="Wissotski M."/>
            <person name="Campos D."/>
            <person name="Kudrna D."/>
            <person name="Golser W."/>
            <person name="Ashely E."/>
            <person name="Haller K."/>
            <person name="Descour A."/>
            <person name="Fernandes J."/>
            <person name="Zuccolo A."/>
            <person name="Soderlund C."/>
            <person name="Walbot V."/>
        </authorList>
    </citation>
    <scope>NUCLEOTIDE SEQUENCE [LARGE SCALE MRNA]</scope>
    <source>
        <strain>cv. B73</strain>
    </source>
</reference>
<reference key="3">
    <citation type="journal article" date="2009" name="Plant Mol. Biol.">
        <title>Insights into corn genes derived from large-scale cDNA sequencing.</title>
        <authorList>
            <person name="Alexandrov N.N."/>
            <person name="Brover V.V."/>
            <person name="Freidin S."/>
            <person name="Troukhan M.E."/>
            <person name="Tatarinova T.V."/>
            <person name="Zhang H."/>
            <person name="Swaller T.J."/>
            <person name="Lu Y.-P."/>
            <person name="Bouck J."/>
            <person name="Flavell R.B."/>
            <person name="Feldmann K.A."/>
        </authorList>
    </citation>
    <scope>NUCLEOTIDE SEQUENCE [LARGE SCALE MRNA]</scope>
</reference>
<protein>
    <recommendedName>
        <fullName>Cell number regulator 5</fullName>
    </recommendedName>
    <alternativeName>
        <fullName>ZmCNR05</fullName>
    </alternativeName>
</protein>
<name>CNR5_MAIZE</name>
<proteinExistence type="evidence at transcript level"/>
<accession>B4FF80</accession>
<accession>B6TTK2</accession>